<feature type="chain" id="PRO_1000015419" description="Large-conductance mechanosensitive channel">
    <location>
        <begin position="1"/>
        <end position="146"/>
    </location>
</feature>
<feature type="transmembrane region" description="Helical" evidence="1">
    <location>
        <begin position="21"/>
        <end position="41"/>
    </location>
</feature>
<feature type="transmembrane region" description="Helical" evidence="1">
    <location>
        <begin position="44"/>
        <end position="64"/>
    </location>
</feature>
<feature type="transmembrane region" description="Helical" evidence="1">
    <location>
        <begin position="83"/>
        <end position="103"/>
    </location>
</feature>
<organism>
    <name type="scientific">Cereibacter sphaeroides (strain ATCC 17029 / ATH 2.4.9)</name>
    <name type="common">Rhodobacter sphaeroides</name>
    <dbReference type="NCBI Taxonomy" id="349101"/>
    <lineage>
        <taxon>Bacteria</taxon>
        <taxon>Pseudomonadati</taxon>
        <taxon>Pseudomonadota</taxon>
        <taxon>Alphaproteobacteria</taxon>
        <taxon>Rhodobacterales</taxon>
        <taxon>Paracoccaceae</taxon>
        <taxon>Cereibacter</taxon>
    </lineage>
</organism>
<evidence type="ECO:0000255" key="1">
    <source>
        <dbReference type="HAMAP-Rule" id="MF_00115"/>
    </source>
</evidence>
<dbReference type="EMBL" id="CP000577">
    <property type="protein sequence ID" value="ABN77481.1"/>
    <property type="molecule type" value="Genomic_DNA"/>
</dbReference>
<dbReference type="SMR" id="A3PMB5"/>
<dbReference type="KEGG" id="rsh:Rsph17029_2379"/>
<dbReference type="HOGENOM" id="CLU_095787_0_1_5"/>
<dbReference type="GO" id="GO:0005886">
    <property type="term" value="C:plasma membrane"/>
    <property type="evidence" value="ECO:0007669"/>
    <property type="project" value="UniProtKB-SubCell"/>
</dbReference>
<dbReference type="GO" id="GO:0008381">
    <property type="term" value="F:mechanosensitive monoatomic ion channel activity"/>
    <property type="evidence" value="ECO:0007669"/>
    <property type="project" value="UniProtKB-UniRule"/>
</dbReference>
<dbReference type="Gene3D" id="1.10.1200.120">
    <property type="entry name" value="Large-conductance mechanosensitive channel, MscL, domain 1"/>
    <property type="match status" value="1"/>
</dbReference>
<dbReference type="HAMAP" id="MF_00115">
    <property type="entry name" value="MscL"/>
    <property type="match status" value="1"/>
</dbReference>
<dbReference type="InterPro" id="IPR019823">
    <property type="entry name" value="Mechanosensitive_channel_CS"/>
</dbReference>
<dbReference type="InterPro" id="IPR001185">
    <property type="entry name" value="MS_channel"/>
</dbReference>
<dbReference type="InterPro" id="IPR037673">
    <property type="entry name" value="MSC/AndL"/>
</dbReference>
<dbReference type="InterPro" id="IPR036019">
    <property type="entry name" value="MscL_channel"/>
</dbReference>
<dbReference type="NCBIfam" id="TIGR00220">
    <property type="entry name" value="mscL"/>
    <property type="match status" value="1"/>
</dbReference>
<dbReference type="NCBIfam" id="NF001843">
    <property type="entry name" value="PRK00567.1-4"/>
    <property type="match status" value="1"/>
</dbReference>
<dbReference type="NCBIfam" id="NF010557">
    <property type="entry name" value="PRK13952.1"/>
    <property type="match status" value="1"/>
</dbReference>
<dbReference type="PANTHER" id="PTHR30266:SF2">
    <property type="entry name" value="LARGE-CONDUCTANCE MECHANOSENSITIVE CHANNEL"/>
    <property type="match status" value="1"/>
</dbReference>
<dbReference type="PANTHER" id="PTHR30266">
    <property type="entry name" value="MECHANOSENSITIVE CHANNEL MSCL"/>
    <property type="match status" value="1"/>
</dbReference>
<dbReference type="Pfam" id="PF01741">
    <property type="entry name" value="MscL"/>
    <property type="match status" value="1"/>
</dbReference>
<dbReference type="PRINTS" id="PR01264">
    <property type="entry name" value="MECHCHANNEL"/>
</dbReference>
<dbReference type="SUPFAM" id="SSF81330">
    <property type="entry name" value="Gated mechanosensitive channel"/>
    <property type="match status" value="1"/>
</dbReference>
<dbReference type="PROSITE" id="PS01327">
    <property type="entry name" value="MSCL"/>
    <property type="match status" value="1"/>
</dbReference>
<proteinExistence type="inferred from homology"/>
<accession>A3PMB5</accession>
<name>MSCL_CERS1</name>
<protein>
    <recommendedName>
        <fullName evidence="1">Large-conductance mechanosensitive channel</fullName>
    </recommendedName>
</protein>
<sequence length="146" mass="15391">MSILDEFKSFIAKGNVMDMAVGIIIGAAFTGIVSSLVADLINPIIGLITGGIDFSNLFVNLGDGDYASLAAARDAGAPVFAYGSFITAVINFLIIAWVVFLLVKIVNRVKDAAIHKSAKEAEAQPAGPTQEQLLAEIRDLLKRSPA</sequence>
<gene>
    <name evidence="1" type="primary">mscL</name>
    <name type="ordered locus">Rsph17029_2379</name>
</gene>
<comment type="function">
    <text evidence="1">Channel that opens in response to stretch forces in the membrane lipid bilayer. May participate in the regulation of osmotic pressure changes within the cell.</text>
</comment>
<comment type="subunit">
    <text evidence="1">Homopentamer.</text>
</comment>
<comment type="subcellular location">
    <subcellularLocation>
        <location evidence="1">Cell inner membrane</location>
        <topology evidence="1">Multi-pass membrane protein</topology>
    </subcellularLocation>
</comment>
<comment type="similarity">
    <text evidence="1">Belongs to the MscL family.</text>
</comment>
<reference key="1">
    <citation type="submission" date="2007-02" db="EMBL/GenBank/DDBJ databases">
        <title>Complete sequence of chromosome 1 of Rhodobacter sphaeroides ATCC 17029.</title>
        <authorList>
            <person name="Copeland A."/>
            <person name="Lucas S."/>
            <person name="Lapidus A."/>
            <person name="Barry K."/>
            <person name="Detter J.C."/>
            <person name="Glavina del Rio T."/>
            <person name="Hammon N."/>
            <person name="Israni S."/>
            <person name="Dalin E."/>
            <person name="Tice H."/>
            <person name="Pitluck S."/>
            <person name="Kiss H."/>
            <person name="Brettin T."/>
            <person name="Bruce D."/>
            <person name="Han C."/>
            <person name="Tapia R."/>
            <person name="Gilna P."/>
            <person name="Schmutz J."/>
            <person name="Larimer F."/>
            <person name="Land M."/>
            <person name="Hauser L."/>
            <person name="Kyrpides N."/>
            <person name="Mikhailova N."/>
            <person name="Richardson P."/>
            <person name="Mackenzie C."/>
            <person name="Choudhary M."/>
            <person name="Donohue T.J."/>
            <person name="Kaplan S."/>
        </authorList>
    </citation>
    <scope>NUCLEOTIDE SEQUENCE [LARGE SCALE GENOMIC DNA]</scope>
    <source>
        <strain>ATCC 17029 / ATH 2.4.9</strain>
    </source>
</reference>
<keyword id="KW-0997">Cell inner membrane</keyword>
<keyword id="KW-1003">Cell membrane</keyword>
<keyword id="KW-0407">Ion channel</keyword>
<keyword id="KW-0406">Ion transport</keyword>
<keyword id="KW-0472">Membrane</keyword>
<keyword id="KW-0812">Transmembrane</keyword>
<keyword id="KW-1133">Transmembrane helix</keyword>
<keyword id="KW-0813">Transport</keyword>